<protein>
    <recommendedName>
        <fullName evidence="1">Phosphatidylserine decarboxylase proenzyme</fullName>
        <ecNumber evidence="1">4.1.1.65</ecNumber>
    </recommendedName>
    <component>
        <recommendedName>
            <fullName evidence="1">Phosphatidylserine decarboxylase alpha chain</fullName>
        </recommendedName>
    </component>
    <component>
        <recommendedName>
            <fullName evidence="1">Phosphatidylserine decarboxylase beta chain</fullName>
        </recommendedName>
    </component>
</protein>
<gene>
    <name evidence="1" type="primary">psd</name>
    <name type="ordered locus">GSU1908</name>
</gene>
<reference key="1">
    <citation type="journal article" date="2003" name="Science">
        <title>Genome of Geobacter sulfurreducens: metal reduction in subsurface environments.</title>
        <authorList>
            <person name="Methe B.A."/>
            <person name="Nelson K.E."/>
            <person name="Eisen J.A."/>
            <person name="Paulsen I.T."/>
            <person name="Nelson W.C."/>
            <person name="Heidelberg J.F."/>
            <person name="Wu D."/>
            <person name="Wu M."/>
            <person name="Ward N.L."/>
            <person name="Beanan M.J."/>
            <person name="Dodson R.J."/>
            <person name="Madupu R."/>
            <person name="Brinkac L.M."/>
            <person name="Daugherty S.C."/>
            <person name="DeBoy R.T."/>
            <person name="Durkin A.S."/>
            <person name="Gwinn M.L."/>
            <person name="Kolonay J.F."/>
            <person name="Sullivan S.A."/>
            <person name="Haft D.H."/>
            <person name="Selengut J."/>
            <person name="Davidsen T.M."/>
            <person name="Zafar N."/>
            <person name="White O."/>
            <person name="Tran B."/>
            <person name="Romero C."/>
            <person name="Forberger H.A."/>
            <person name="Weidman J.F."/>
            <person name="Khouri H.M."/>
            <person name="Feldblyum T.V."/>
            <person name="Utterback T.R."/>
            <person name="Van Aken S.E."/>
            <person name="Lovley D.R."/>
            <person name="Fraser C.M."/>
        </authorList>
    </citation>
    <scope>NUCLEOTIDE SEQUENCE [LARGE SCALE GENOMIC DNA]</scope>
    <source>
        <strain>ATCC 51573 / DSM 12127 / PCA</strain>
    </source>
</reference>
<proteinExistence type="inferred from homology"/>
<keyword id="KW-1003">Cell membrane</keyword>
<keyword id="KW-0210">Decarboxylase</keyword>
<keyword id="KW-0444">Lipid biosynthesis</keyword>
<keyword id="KW-0443">Lipid metabolism</keyword>
<keyword id="KW-0456">Lyase</keyword>
<keyword id="KW-0472">Membrane</keyword>
<keyword id="KW-0594">Phospholipid biosynthesis</keyword>
<keyword id="KW-1208">Phospholipid metabolism</keyword>
<keyword id="KW-0670">Pyruvate</keyword>
<keyword id="KW-1185">Reference proteome</keyword>
<keyword id="KW-0865">Zymogen</keyword>
<organism>
    <name type="scientific">Geobacter sulfurreducens (strain ATCC 51573 / DSM 12127 / PCA)</name>
    <dbReference type="NCBI Taxonomy" id="243231"/>
    <lineage>
        <taxon>Bacteria</taxon>
        <taxon>Pseudomonadati</taxon>
        <taxon>Thermodesulfobacteriota</taxon>
        <taxon>Desulfuromonadia</taxon>
        <taxon>Geobacterales</taxon>
        <taxon>Geobacteraceae</taxon>
        <taxon>Geobacter</taxon>
    </lineage>
</organism>
<dbReference type="EC" id="4.1.1.65" evidence="1"/>
<dbReference type="EMBL" id="AE017180">
    <property type="protein sequence ID" value="AAR35284.1"/>
    <property type="molecule type" value="Genomic_DNA"/>
</dbReference>
<dbReference type="RefSeq" id="NP_952957.1">
    <property type="nucleotide sequence ID" value="NC_002939.5"/>
</dbReference>
<dbReference type="RefSeq" id="WP_010942553.1">
    <property type="nucleotide sequence ID" value="NC_002939.5"/>
</dbReference>
<dbReference type="STRING" id="243231.GSU1908"/>
<dbReference type="EnsemblBacteria" id="AAR35284">
    <property type="protein sequence ID" value="AAR35284"/>
    <property type="gene ID" value="GSU1908"/>
</dbReference>
<dbReference type="KEGG" id="gsu:GSU1908"/>
<dbReference type="PATRIC" id="fig|243231.5.peg.1946"/>
<dbReference type="eggNOG" id="COG0688">
    <property type="taxonomic scope" value="Bacteria"/>
</dbReference>
<dbReference type="HOGENOM" id="CLU_072492_0_0_7"/>
<dbReference type="InParanoid" id="Q74BX0"/>
<dbReference type="OrthoDB" id="9790893at2"/>
<dbReference type="UniPathway" id="UPA00558">
    <property type="reaction ID" value="UER00616"/>
</dbReference>
<dbReference type="Proteomes" id="UP000000577">
    <property type="component" value="Chromosome"/>
</dbReference>
<dbReference type="GO" id="GO:0005886">
    <property type="term" value="C:plasma membrane"/>
    <property type="evidence" value="ECO:0007669"/>
    <property type="project" value="UniProtKB-SubCell"/>
</dbReference>
<dbReference type="GO" id="GO:0004609">
    <property type="term" value="F:phosphatidylserine decarboxylase activity"/>
    <property type="evidence" value="ECO:0007669"/>
    <property type="project" value="UniProtKB-UniRule"/>
</dbReference>
<dbReference type="GO" id="GO:0006646">
    <property type="term" value="P:phosphatidylethanolamine biosynthetic process"/>
    <property type="evidence" value="ECO:0007669"/>
    <property type="project" value="UniProtKB-UniRule"/>
</dbReference>
<dbReference type="HAMAP" id="MF_00664">
    <property type="entry name" value="PS_decarb_PSD_A"/>
    <property type="match status" value="1"/>
</dbReference>
<dbReference type="InterPro" id="IPR003817">
    <property type="entry name" value="PS_Dcarbxylase"/>
</dbReference>
<dbReference type="InterPro" id="IPR033175">
    <property type="entry name" value="PSD-A"/>
</dbReference>
<dbReference type="NCBIfam" id="NF003678">
    <property type="entry name" value="PRK05305.1-2"/>
    <property type="match status" value="1"/>
</dbReference>
<dbReference type="NCBIfam" id="NF003685">
    <property type="entry name" value="PRK05305.2-5"/>
    <property type="match status" value="1"/>
</dbReference>
<dbReference type="PANTHER" id="PTHR35809">
    <property type="entry name" value="ARCHAETIDYLSERINE DECARBOXYLASE PROENZYME-RELATED"/>
    <property type="match status" value="1"/>
</dbReference>
<dbReference type="PANTHER" id="PTHR35809:SF1">
    <property type="entry name" value="ARCHAETIDYLSERINE DECARBOXYLASE PROENZYME-RELATED"/>
    <property type="match status" value="1"/>
</dbReference>
<dbReference type="Pfam" id="PF02666">
    <property type="entry name" value="PS_Dcarbxylase"/>
    <property type="match status" value="1"/>
</dbReference>
<accession>Q74BX0</accession>
<sequence length="218" mass="23678">MRNENTPIAVEGYPFIAIAGVLTLILAAVSWHAPVVWAGTAFFLTVTLFVAFFFRNPERITPGNENAVVAPADGVVIYLGPAREEHLGVETTKISIFMSVFNVHINRAPVSGTVLDTFYVKGKFLDVRDDRATFENEQAGLVIETARGLRLAVVQVAGLIARRIVCYAGKGDRLTRGGRYGLIRFGSRLDIYLPTTTEVKVALGEKTVAGETVLGILP</sequence>
<evidence type="ECO:0000255" key="1">
    <source>
        <dbReference type="HAMAP-Rule" id="MF_00664"/>
    </source>
</evidence>
<comment type="function">
    <text evidence="1">Catalyzes the formation of phosphatidylethanolamine (PtdEtn) from phosphatidylserine (PtdSer).</text>
</comment>
<comment type="catalytic activity">
    <reaction evidence="1">
        <text>a 1,2-diacyl-sn-glycero-3-phospho-L-serine + H(+) = a 1,2-diacyl-sn-glycero-3-phosphoethanolamine + CO2</text>
        <dbReference type="Rhea" id="RHEA:20828"/>
        <dbReference type="ChEBI" id="CHEBI:15378"/>
        <dbReference type="ChEBI" id="CHEBI:16526"/>
        <dbReference type="ChEBI" id="CHEBI:57262"/>
        <dbReference type="ChEBI" id="CHEBI:64612"/>
        <dbReference type="EC" id="4.1.1.65"/>
    </reaction>
</comment>
<comment type="cofactor">
    <cofactor evidence="1">
        <name>pyruvate</name>
        <dbReference type="ChEBI" id="CHEBI:15361"/>
    </cofactor>
    <text evidence="1">Binds 1 pyruvoyl group covalently per subunit.</text>
</comment>
<comment type="pathway">
    <text evidence="1">Phospholipid metabolism; phosphatidylethanolamine biosynthesis; phosphatidylethanolamine from CDP-diacylglycerol: step 2/2.</text>
</comment>
<comment type="subunit">
    <text evidence="1">Heterodimer of a large membrane-associated beta subunit and a small pyruvoyl-containing alpha subunit.</text>
</comment>
<comment type="subcellular location">
    <subcellularLocation>
        <location evidence="1">Cell membrane</location>
        <topology evidence="1">Peripheral membrane protein</topology>
    </subcellularLocation>
</comment>
<comment type="PTM">
    <text evidence="1">Is synthesized initially as an inactive proenzyme. Formation of the active enzyme involves a self-maturation process in which the active site pyruvoyl group is generated from an internal serine residue via an autocatalytic post-translational modification. Two non-identical subunits are generated from the proenzyme in this reaction, and the pyruvate is formed at the N-terminus of the alpha chain, which is derived from the carboxyl end of the proenzyme. The post-translation cleavage follows an unusual pathway, termed non-hydrolytic serinolysis, in which the side chain hydroxyl group of the serine supplies its oxygen atom to form the C-terminus of the beta chain, while the remainder of the serine residue undergoes an oxidative deamination to produce ammonia and the pyruvoyl prosthetic group on the alpha chain.</text>
</comment>
<comment type="similarity">
    <text evidence="1">Belongs to the phosphatidylserine decarboxylase family. PSD-A subfamily.</text>
</comment>
<feature type="chain" id="PRO_0000029773" description="Phosphatidylserine decarboxylase beta chain" evidence="1">
    <location>
        <begin position="1"/>
        <end position="186"/>
    </location>
</feature>
<feature type="chain" id="PRO_0000029774" description="Phosphatidylserine decarboxylase alpha chain" evidence="1">
    <location>
        <begin position="187"/>
        <end position="218"/>
    </location>
</feature>
<feature type="active site" description="Schiff-base intermediate with substrate; via pyruvic acid" evidence="1">
    <location>
        <position position="187"/>
    </location>
</feature>
<feature type="site" description="Cleavage (non-hydrolytic); by autocatalysis" evidence="1">
    <location>
        <begin position="186"/>
        <end position="187"/>
    </location>
</feature>
<feature type="modified residue" description="Pyruvic acid (Ser); by autocatalysis" evidence="1">
    <location>
        <position position="187"/>
    </location>
</feature>
<name>PSD_GEOSL</name>